<proteinExistence type="evidence at protein level"/>
<dbReference type="EMBL" id="Z49702">
    <property type="protein sequence ID" value="CAA89752.1"/>
    <property type="molecule type" value="Genomic_DNA"/>
</dbReference>
<dbReference type="EMBL" id="BK006946">
    <property type="protein sequence ID" value="DAA10012.1"/>
    <property type="molecule type" value="Genomic_DNA"/>
</dbReference>
<dbReference type="PIR" id="S54576">
    <property type="entry name" value="S54576"/>
</dbReference>
<dbReference type="RefSeq" id="NP_013833.1">
    <property type="nucleotide sequence ID" value="NM_001182615.1"/>
</dbReference>
<dbReference type="SMR" id="Q04472"/>
<dbReference type="BioGRID" id="35291">
    <property type="interactions" value="213"/>
</dbReference>
<dbReference type="ComplexPortal" id="CPX-1655">
    <property type="entry name" value="i-AAA complex"/>
</dbReference>
<dbReference type="DIP" id="DIP-7624N"/>
<dbReference type="FunCoup" id="Q04472">
    <property type="interactions" value="54"/>
</dbReference>
<dbReference type="IntAct" id="Q04472">
    <property type="interactions" value="6"/>
</dbReference>
<dbReference type="STRING" id="4932.YMR115W"/>
<dbReference type="PaxDb" id="4932-YMR115W"/>
<dbReference type="PeptideAtlas" id="Q04472"/>
<dbReference type="EnsemblFungi" id="YMR115W_mRNA">
    <property type="protein sequence ID" value="YMR115W"/>
    <property type="gene ID" value="YMR115W"/>
</dbReference>
<dbReference type="GeneID" id="855142"/>
<dbReference type="KEGG" id="sce:YMR115W"/>
<dbReference type="AGR" id="SGD:S000004721"/>
<dbReference type="SGD" id="S000004721">
    <property type="gene designation" value="MGR3"/>
</dbReference>
<dbReference type="VEuPathDB" id="FungiDB:YMR115W"/>
<dbReference type="eggNOG" id="ENOG502QU02">
    <property type="taxonomic scope" value="Eukaryota"/>
</dbReference>
<dbReference type="GeneTree" id="ENSGT00940000176771"/>
<dbReference type="HOGENOM" id="CLU_039436_0_0_1"/>
<dbReference type="InParanoid" id="Q04472"/>
<dbReference type="OMA" id="CKMTTVE"/>
<dbReference type="OrthoDB" id="10050400at2759"/>
<dbReference type="BioCyc" id="YEAST:G3O-32810-MONOMER"/>
<dbReference type="BioGRID-ORCS" id="855142">
    <property type="hits" value="3 hits in 10 CRISPR screens"/>
</dbReference>
<dbReference type="PRO" id="PR:Q04472"/>
<dbReference type="Proteomes" id="UP000002311">
    <property type="component" value="Chromosome XIII"/>
</dbReference>
<dbReference type="RNAct" id="Q04472">
    <property type="molecule type" value="protein"/>
</dbReference>
<dbReference type="GO" id="GO:0031942">
    <property type="term" value="C:i-AAA complex"/>
    <property type="evidence" value="ECO:0000314"/>
    <property type="project" value="SGD"/>
</dbReference>
<dbReference type="GO" id="GO:0005743">
    <property type="term" value="C:mitochondrial inner membrane"/>
    <property type="evidence" value="ECO:0000314"/>
    <property type="project" value="SGD"/>
</dbReference>
<dbReference type="GO" id="GO:0005739">
    <property type="term" value="C:mitochondrion"/>
    <property type="evidence" value="ECO:0007005"/>
    <property type="project" value="SGD"/>
</dbReference>
<dbReference type="GO" id="GO:0051787">
    <property type="term" value="F:misfolded protein binding"/>
    <property type="evidence" value="ECO:0000314"/>
    <property type="project" value="SGD"/>
</dbReference>
<dbReference type="GO" id="GO:0141164">
    <property type="term" value="P:mitochondrial protein quality control"/>
    <property type="evidence" value="ECO:0000315"/>
    <property type="project" value="SGD"/>
</dbReference>
<dbReference type="GO" id="GO:0030163">
    <property type="term" value="P:protein catabolic process"/>
    <property type="evidence" value="ECO:0000315"/>
    <property type="project" value="ComplexPortal"/>
</dbReference>
<dbReference type="GO" id="GO:0045041">
    <property type="term" value="P:protein import into mitochondrial intermembrane space"/>
    <property type="evidence" value="ECO:0000303"/>
    <property type="project" value="ComplexPortal"/>
</dbReference>
<dbReference type="GO" id="GO:0006515">
    <property type="term" value="P:protein quality control for misfolded or incompletely synthesized proteins"/>
    <property type="evidence" value="ECO:0000318"/>
    <property type="project" value="GO_Central"/>
</dbReference>
<dbReference type="CDD" id="cd24145">
    <property type="entry name" value="Mgr3-like"/>
    <property type="match status" value="1"/>
</dbReference>
<dbReference type="InterPro" id="IPR040201">
    <property type="entry name" value="Mrg3-like"/>
</dbReference>
<dbReference type="PANTHER" id="PTHR28142">
    <property type="entry name" value="MITOCHONDRIAL INNER MEMBRANE I-AAA PROTEASE SUPERCOMPLEX SUBUNIT MGR3-RELATED"/>
    <property type="match status" value="1"/>
</dbReference>
<dbReference type="PANTHER" id="PTHR28142:SF1">
    <property type="entry name" value="MITOCHONDRIAL INNER MEMBRANE I-AAA PROTEASE SUPERCOMPLEX SUBUNIT MGR3-RELATED"/>
    <property type="match status" value="1"/>
</dbReference>
<comment type="function">
    <text evidence="4">Component of the mitochondrial inner membrane i-AAA protease supercomplex, which degrades misfolded mitochondrial proteins. Together with MGR1, functions in an adapter complex that targets substrates to the i-AAA protease for degradation. Required for growth of cells lacking the mitochondrial genome.</text>
</comment>
<comment type="subunit">
    <text evidence="4">Component of the mitochondrial inner membrane i-AAA protease supercomplex composed of MGR1, MGR3 and YME1. With MGR1, forms a subcomplex that binds to YME1 and to substrates to facilitate proteolysis.</text>
</comment>
<comment type="subcellular location">
    <subcellularLocation>
        <location evidence="5">Mitochondrion inner membrane</location>
        <topology evidence="5">Single-pass membrane protein</topology>
    </subcellularLocation>
</comment>
<comment type="disruption phenotype">
    <text evidence="4">Reduces proteolysis by YME1.</text>
</comment>
<comment type="miscellaneous">
    <text evidence="3">Present with 8970 molecules/cell in log phase SD medium.</text>
</comment>
<comment type="similarity">
    <text evidence="5">Belongs to the MGR3 family.</text>
</comment>
<gene>
    <name type="primary">MGR3</name>
    <name type="synonym">FMP24</name>
    <name type="ordered locus">YMR115W</name>
    <name type="ORF">YM9718.14</name>
</gene>
<keyword id="KW-0472">Membrane</keyword>
<keyword id="KW-0496">Mitochondrion</keyword>
<keyword id="KW-0999">Mitochondrion inner membrane</keyword>
<keyword id="KW-1185">Reference proteome</keyword>
<keyword id="KW-0677">Repeat</keyword>
<keyword id="KW-0802">TPR repeat</keyword>
<keyword id="KW-0812">Transmembrane</keyword>
<keyword id="KW-1133">Transmembrane helix</keyword>
<feature type="chain" id="PRO_0000203293" description="Mitochondrial inner membrane i-AAA protease supercomplex subunit MGR3">
    <location>
        <begin position="1"/>
        <end position="501"/>
    </location>
</feature>
<feature type="topological domain" description="Mitochondrial matrix" evidence="4">
    <location>
        <begin position="1"/>
        <end position="77"/>
    </location>
</feature>
<feature type="transmembrane region" description="Helical" evidence="1">
    <location>
        <begin position="78"/>
        <end position="95"/>
    </location>
</feature>
<feature type="topological domain" description="Mitochondrial intermembrane" evidence="4">
    <location>
        <begin position="96"/>
        <end position="501"/>
    </location>
</feature>
<feature type="repeat" description="TPR 1">
    <location>
        <begin position="109"/>
        <end position="144"/>
    </location>
</feature>
<feature type="repeat" description="TPR 2">
    <location>
        <begin position="154"/>
        <end position="187"/>
    </location>
</feature>
<feature type="repeat" description="TPR 3">
    <location>
        <begin position="386"/>
        <end position="420"/>
    </location>
</feature>
<feature type="repeat" description="TPR 4">
    <location>
        <begin position="440"/>
        <end position="473"/>
    </location>
</feature>
<feature type="region of interest" description="Disordered" evidence="2">
    <location>
        <begin position="39"/>
        <end position="72"/>
    </location>
</feature>
<protein>
    <recommendedName>
        <fullName>Mitochondrial inner membrane i-AAA protease supercomplex subunit MGR3</fullName>
    </recommendedName>
    <alternativeName>
        <fullName>Mitochondrial genome-required protein 3</fullName>
    </alternativeName>
</protein>
<organism>
    <name type="scientific">Saccharomyces cerevisiae (strain ATCC 204508 / S288c)</name>
    <name type="common">Baker's yeast</name>
    <dbReference type="NCBI Taxonomy" id="559292"/>
    <lineage>
        <taxon>Eukaryota</taxon>
        <taxon>Fungi</taxon>
        <taxon>Dikarya</taxon>
        <taxon>Ascomycota</taxon>
        <taxon>Saccharomycotina</taxon>
        <taxon>Saccharomycetes</taxon>
        <taxon>Saccharomycetales</taxon>
        <taxon>Saccharomycetaceae</taxon>
        <taxon>Saccharomyces</taxon>
    </lineage>
</organism>
<accession>Q04472</accession>
<accession>D6VZT8</accession>
<sequence>MLLQGMRLSQRLHKRHLFASKILTWTTNPAHIRHLHDIRPPASNFNTQESAPIPESPANSPTRPQMAPKPNLKKKNRSLMYSIIGVSIVGLYFWFKSNSRKQKLPLSAQKVWKEAIWQESDKMDFNYKEALRRYIEALDECDRSHVDLLSDDYTRIELKIAEMYEKLNMLEEAQNLYQELLSRFFEALNVPGKVDESERGEVLRKDLRILIKSLEINKDIESGKRKLLQHLLLAQEEILSKSPELKEFFENRKKKLSMVKDINRDPNDDFKTFVSEENIKFDEQGYMILDLEKNSSAWEPFKEEFFTARDLYTAYCLSSKDIAAALSCKITSVEWMVMADMPPGQILLSQANLGSLFYLQAEKLEADLNQLEQKKSKESNQELDMGTYIKAVRFVRKNRDLCLERAQKCYDSVIAFAKRNRKIRFHVKDQLDPSIAQSIALSTYGMGVLSLHEGVLAKAEKLFKDSITMAKETEFNELLAEAEKELEKTTVLKAAKKEGLN</sequence>
<evidence type="ECO:0000255" key="1"/>
<evidence type="ECO:0000256" key="2">
    <source>
        <dbReference type="SAM" id="MobiDB-lite"/>
    </source>
</evidence>
<evidence type="ECO:0000269" key="3">
    <source>
    </source>
</evidence>
<evidence type="ECO:0000269" key="4">
    <source>
    </source>
</evidence>
<evidence type="ECO:0000305" key="5"/>
<name>MGR3_YEAST</name>
<reference key="1">
    <citation type="journal article" date="1997" name="Nature">
        <title>The nucleotide sequence of Saccharomyces cerevisiae chromosome XIII.</title>
        <authorList>
            <person name="Bowman S."/>
            <person name="Churcher C.M."/>
            <person name="Badcock K."/>
            <person name="Brown D."/>
            <person name="Chillingworth T."/>
            <person name="Connor R."/>
            <person name="Dedman K."/>
            <person name="Devlin K."/>
            <person name="Gentles S."/>
            <person name="Hamlin N."/>
            <person name="Hunt S."/>
            <person name="Jagels K."/>
            <person name="Lye G."/>
            <person name="Moule S."/>
            <person name="Odell C."/>
            <person name="Pearson D."/>
            <person name="Rajandream M.A."/>
            <person name="Rice P."/>
            <person name="Skelton J."/>
            <person name="Walsh S.V."/>
            <person name="Whitehead S."/>
            <person name="Barrell B.G."/>
        </authorList>
    </citation>
    <scope>NUCLEOTIDE SEQUENCE [LARGE SCALE GENOMIC DNA]</scope>
    <source>
        <strain>ATCC 204508 / S288c</strain>
    </source>
</reference>
<reference key="2">
    <citation type="journal article" date="2014" name="G3 (Bethesda)">
        <title>The reference genome sequence of Saccharomyces cerevisiae: Then and now.</title>
        <authorList>
            <person name="Engel S.R."/>
            <person name="Dietrich F.S."/>
            <person name="Fisk D.G."/>
            <person name="Binkley G."/>
            <person name="Balakrishnan R."/>
            <person name="Costanzo M.C."/>
            <person name="Dwight S.S."/>
            <person name="Hitz B.C."/>
            <person name="Karra K."/>
            <person name="Nash R.S."/>
            <person name="Weng S."/>
            <person name="Wong E.D."/>
            <person name="Lloyd P."/>
            <person name="Skrzypek M.S."/>
            <person name="Miyasato S.R."/>
            <person name="Simison M."/>
            <person name="Cherry J.M."/>
        </authorList>
    </citation>
    <scope>GENOME REANNOTATION</scope>
    <source>
        <strain>ATCC 204508 / S288c</strain>
    </source>
</reference>
<reference key="3">
    <citation type="journal article" date="2003" name="Nature">
        <title>Global analysis of protein localization in budding yeast.</title>
        <authorList>
            <person name="Huh W.-K."/>
            <person name="Falvo J.V."/>
            <person name="Gerke L.C."/>
            <person name="Carroll A.S."/>
            <person name="Howson R.W."/>
            <person name="Weissman J.S."/>
            <person name="O'Shea E.K."/>
        </authorList>
    </citation>
    <scope>SUBCELLULAR LOCATION [LARGE SCALE ANALYSIS]</scope>
</reference>
<reference key="4">
    <citation type="journal article" date="2003" name="Nature">
        <title>Global analysis of protein expression in yeast.</title>
        <authorList>
            <person name="Ghaemmaghami S."/>
            <person name="Huh W.-K."/>
            <person name="Bower K."/>
            <person name="Howson R.W."/>
            <person name="Belle A."/>
            <person name="Dephoure N."/>
            <person name="O'Shea E.K."/>
            <person name="Weissman J.S."/>
        </authorList>
    </citation>
    <scope>LEVEL OF PROTEIN EXPRESSION [LARGE SCALE ANALYSIS]</scope>
</reference>
<reference key="5">
    <citation type="journal article" date="2003" name="Proc. Natl. Acad. Sci. U.S.A.">
        <title>The proteome of Saccharomyces cerevisiae mitochondria.</title>
        <authorList>
            <person name="Sickmann A."/>
            <person name="Reinders J."/>
            <person name="Wagner Y."/>
            <person name="Joppich C."/>
            <person name="Zahedi R.P."/>
            <person name="Meyer H.E."/>
            <person name="Schoenfisch B."/>
            <person name="Perschil I."/>
            <person name="Chacinska A."/>
            <person name="Guiard B."/>
            <person name="Rehling P."/>
            <person name="Pfanner N."/>
            <person name="Meisinger C."/>
        </authorList>
    </citation>
    <scope>SUBCELLULAR LOCATION [LARGE SCALE ANALYSIS]</scope>
    <source>
        <strain>ATCC 76625 / YPH499</strain>
    </source>
</reference>
<reference key="6">
    <citation type="journal article" date="2008" name="Mol. Biol. Cell">
        <title>Mgr3p and Mgr1p are adaptors for the mitochondrial i-AAA protease complex.</title>
        <authorList>
            <person name="Dunn C.D."/>
            <person name="Tamura Y."/>
            <person name="Sesaki H."/>
            <person name="Jensen R.E."/>
        </authorList>
    </citation>
    <scope>FUNCTION</scope>
    <scope>SUBUNIT</scope>
    <scope>SUBCELLULAR LOCATION</scope>
    <scope>DISRUPTION PHENOTYPE</scope>
    <scope>TOPOLOGY</scope>
</reference>